<keyword id="KW-0002">3D-structure</keyword>
<keyword id="KW-0167">Capsid protein</keyword>
<keyword id="KW-1176">Cytoplasmic inwards viral transport</keyword>
<keyword id="KW-0903">Direct protein sequencing</keyword>
<keyword id="KW-1015">Disulfide bond</keyword>
<keyword id="KW-1035">Host cytoplasm</keyword>
<keyword id="KW-1048">Host nucleus</keyword>
<keyword id="KW-0945">Host-virus interaction</keyword>
<keyword id="KW-0426">Late protein</keyword>
<keyword id="KW-1177">Microtubular inwards viral transport</keyword>
<keyword id="KW-0597">Phosphoprotein</keyword>
<keyword id="KW-1185">Reference proteome</keyword>
<keyword id="KW-0832">Ubl conjugation</keyword>
<keyword id="KW-0118">Viral capsid assembly</keyword>
<keyword id="KW-1162">Viral penetration into host cytoplasm</keyword>
<keyword id="KW-1174">Viral penetration via lysis of host organellar membrane</keyword>
<keyword id="KW-1188">Viral release from host cell</keyword>
<keyword id="KW-0946">Virion</keyword>
<keyword id="KW-1160">Virus entry into host cell</keyword>
<name>CAP6_ADE02</name>
<proteinExistence type="evidence at protein level"/>
<evidence type="ECO:0000255" key="1">
    <source>
        <dbReference type="HAMAP-Rule" id="MF_04048"/>
    </source>
</evidence>
<evidence type="ECO:0000256" key="2">
    <source>
        <dbReference type="SAM" id="MobiDB-lite"/>
    </source>
</evidence>
<evidence type="ECO:0000269" key="3">
    <source>
    </source>
</evidence>
<evidence type="ECO:0000269" key="4">
    <source>
    </source>
</evidence>
<evidence type="ECO:0000269" key="5">
    <source>
    </source>
</evidence>
<evidence type="ECO:0000269" key="6">
    <source>
    </source>
</evidence>
<evidence type="ECO:0000269" key="7">
    <source>
    </source>
</evidence>
<evidence type="ECO:0000269" key="8">
    <source>
    </source>
</evidence>
<evidence type="ECO:0007829" key="9">
    <source>
        <dbReference type="PDB" id="4PID"/>
    </source>
</evidence>
<sequence length="250" mass="27014">MEDINFASLAPRHGSRPFMGNWQDIGTSNMSGGAFSWGSLWSGIKNFGSTIKNYGSKAWNSSTGQMLRDKLKEQNFQQKVVDGLASGISGVVDLANQAVQNKINSKLDPRPPVEEPPPAVETVSPEGRGEKRPRPDREETLVTQIDEPPSYEEALKQGLPTTRPIAPMATGVLGQHTPVTLDLPPPADTQQKPVLPGPSAVVVTRPSRASLRRAASGPRSMRPVASGNWQSTLNSIVGLGVQSLKRRRCF</sequence>
<protein>
    <recommendedName>
        <fullName evidence="1">Pre-protein VI</fullName>
        <shortName evidence="1">pVI</shortName>
    </recommendedName>
    <component>
        <recommendedName>
            <fullName evidence="1">Endosome lysis protein</fullName>
        </recommendedName>
    </component>
    <component>
        <recommendedName>
            <fullName evidence="1">Protease cofactor</fullName>
        </recommendedName>
        <alternativeName>
            <fullName evidence="1">pVI-C</fullName>
        </alternativeName>
    </component>
</protein>
<dbReference type="EMBL" id="J01917">
    <property type="protein sequence ID" value="AAA92214.1"/>
    <property type="molecule type" value="Genomic_DNA"/>
</dbReference>
<dbReference type="PIR" id="A03844">
    <property type="entry name" value="Q5ADB2"/>
</dbReference>
<dbReference type="RefSeq" id="AP_000174.1">
    <property type="nucleotide sequence ID" value="AC_000007.1"/>
</dbReference>
<dbReference type="RefSeq" id="NP_040524.1">
    <property type="nucleotide sequence ID" value="NC_001405.1"/>
</dbReference>
<dbReference type="PDB" id="1AVP">
    <property type="method" value="X-ray"/>
    <property type="resolution" value="2.60 A"/>
    <property type="chains" value="B=240-250"/>
</dbReference>
<dbReference type="PDB" id="1NLN">
    <property type="method" value="X-ray"/>
    <property type="resolution" value="1.60 A"/>
    <property type="chains" value="B=240-250"/>
</dbReference>
<dbReference type="PDB" id="4PID">
    <property type="method" value="X-ray"/>
    <property type="resolution" value="1.59 A"/>
    <property type="chains" value="B=240-250"/>
</dbReference>
<dbReference type="PDB" id="4PIE">
    <property type="method" value="X-ray"/>
    <property type="resolution" value="1.94 A"/>
    <property type="chains" value="B=240-250"/>
</dbReference>
<dbReference type="PDB" id="5FGY">
    <property type="method" value="X-ray"/>
    <property type="resolution" value="2.10 A"/>
    <property type="chains" value="B=240-250"/>
</dbReference>
<dbReference type="PDBsum" id="1AVP"/>
<dbReference type="PDBsum" id="1NLN"/>
<dbReference type="PDBsum" id="4PID"/>
<dbReference type="PDBsum" id="4PIE"/>
<dbReference type="PDBsum" id="5FGY"/>
<dbReference type="SMR" id="P03274"/>
<dbReference type="iPTMnet" id="P03274"/>
<dbReference type="GeneID" id="2652998"/>
<dbReference type="EvolutionaryTrace" id="P03274"/>
<dbReference type="Proteomes" id="UP000008167">
    <property type="component" value="Segment"/>
</dbReference>
<dbReference type="GO" id="GO:0043657">
    <property type="term" value="C:host cell"/>
    <property type="evidence" value="ECO:0007669"/>
    <property type="project" value="GOC"/>
</dbReference>
<dbReference type="GO" id="GO:0030430">
    <property type="term" value="C:host cell cytoplasm"/>
    <property type="evidence" value="ECO:0007669"/>
    <property type="project" value="UniProtKB-SubCell"/>
</dbReference>
<dbReference type="GO" id="GO:0042025">
    <property type="term" value="C:host cell nucleus"/>
    <property type="evidence" value="ECO:0007669"/>
    <property type="project" value="UniProtKB-SubCell"/>
</dbReference>
<dbReference type="GO" id="GO:0019028">
    <property type="term" value="C:viral capsid"/>
    <property type="evidence" value="ECO:0007669"/>
    <property type="project" value="UniProtKB-UniRule"/>
</dbReference>
<dbReference type="GO" id="GO:0046729">
    <property type="term" value="C:viral procapsid"/>
    <property type="evidence" value="ECO:0007669"/>
    <property type="project" value="UniProtKB-UniRule"/>
</dbReference>
<dbReference type="GO" id="GO:0039664">
    <property type="term" value="P:lysis of host organelle involved in viral entry into host cell"/>
    <property type="evidence" value="ECO:0007669"/>
    <property type="project" value="UniProtKB-UniRule"/>
</dbReference>
<dbReference type="GO" id="GO:0075521">
    <property type="term" value="P:microtubule-dependent intracellular transport of viral material towards nucleus"/>
    <property type="evidence" value="ECO:0007669"/>
    <property type="project" value="UniProtKB-UniRule"/>
</dbReference>
<dbReference type="GO" id="GO:0039708">
    <property type="term" value="P:nuclear capsid assembly"/>
    <property type="evidence" value="ECO:0000314"/>
    <property type="project" value="UniProtKB"/>
</dbReference>
<dbReference type="GO" id="GO:0019076">
    <property type="term" value="P:viral release from host cell"/>
    <property type="evidence" value="ECO:0007669"/>
    <property type="project" value="UniProtKB-UniRule"/>
</dbReference>
<dbReference type="HAMAP" id="MF_04048">
    <property type="entry name" value="ADV_CAP6"/>
    <property type="match status" value="1"/>
</dbReference>
<dbReference type="InterPro" id="IPR004243">
    <property type="entry name" value="McpVI"/>
</dbReference>
<dbReference type="Pfam" id="PF02993">
    <property type="entry name" value="MCPVI"/>
    <property type="match status" value="1"/>
</dbReference>
<organism>
    <name type="scientific">Human adenovirus C serotype 2</name>
    <name type="common">HAdV-2</name>
    <name type="synonym">Human adenovirus 2</name>
    <dbReference type="NCBI Taxonomy" id="10515"/>
    <lineage>
        <taxon>Viruses</taxon>
        <taxon>Varidnaviria</taxon>
        <taxon>Bamfordvirae</taxon>
        <taxon>Preplasmiviricota</taxon>
        <taxon>Tectiliviricetes</taxon>
        <taxon>Rowavirales</taxon>
        <taxon>Adenoviridae</taxon>
        <taxon>Mastadenovirus</taxon>
        <taxon>Human mastadenovirus C</taxon>
    </lineage>
</organism>
<reference key="1">
    <citation type="journal article" date="1981" name="J. Virol.">
        <title>Gene and mRNA for precursor polypeptide VI from adenovirus type 2.</title>
        <authorList>
            <person name="Akusjaervi G."/>
            <person name="Persson H."/>
        </authorList>
    </citation>
    <scope>NUCLEOTIDE SEQUENCE [GENOMIC DNA]</scope>
</reference>
<reference key="2">
    <citation type="journal article" date="2012" name="Virology">
        <title>The phosphoproteome of the adenovirus type 2 virion.</title>
        <authorList>
            <person name="Bergstrom Lind S."/>
            <person name="Artemenko K.A."/>
            <person name="Elfineh L."/>
            <person name="Zhao Y."/>
            <person name="Bergquist J."/>
            <person name="Pettersson U."/>
        </authorList>
    </citation>
    <scope>PROTEIN SEQUENCE OF 107-128 AND 138-156</scope>
    <scope>PHOSPHORYLATION AT SER-124 AND THR-143</scope>
</reference>
<reference key="3">
    <citation type="journal article" date="1982" name="J. Gen. Virol.">
        <title>Nucleic acid-binding properties of adenovirus structural polypeptides.</title>
        <authorList>
            <person name="Russell W.C."/>
            <person name="Precious B."/>
        </authorList>
    </citation>
    <scope>DNA-BINDING</scope>
    <source>
        <strain>Human adenovirus C serotype 5</strain>
    </source>
</reference>
<reference key="4">
    <citation type="journal article" date="1993" name="Cell">
        <title>The adenovirus protease is activated by a virus-coded disulphide-linked peptide.</title>
        <authorList>
            <person name="Webster A."/>
            <person name="Hay R.T."/>
            <person name="Kemp G."/>
        </authorList>
    </citation>
    <scope>INTERCHAIN DISULFIDE BOND WITH VIRAL PROTEASE (PROTEASE COFACTOR)</scope>
    <scope>SUBUNIT (PROTEASE COFACTOR)</scope>
    <scope>INTERACTION OF PROTEASE COFACTOR WITH VIRAL PROTEASE</scope>
</reference>
<reference key="5">
    <citation type="journal article" date="1995" name="J. Gen. Virol.">
        <title>Adenovirus protein-protein interactions: molecular parameters governing the binding of protein VI to hexon and the activation of the adenovirus 23K protease.</title>
        <authorList>
            <person name="Matthews D.A."/>
            <person name="Russell W.C."/>
        </authorList>
    </citation>
    <scope>INTERACTION OF PRE-PROTEIN VI WITH HEXON PROTEIN</scope>
</reference>
<reference key="6">
    <citation type="journal article" date="2001" name="Biochemistry">
        <title>Interaction of the human adenovirus proteinase with its 11-amino acid cofactor pVIc.</title>
        <authorList>
            <person name="Baniecki M.L."/>
            <person name="McGrath W.J."/>
            <person name="McWhirter S.M."/>
            <person name="Li C."/>
            <person name="Toledo D.L."/>
            <person name="Pellicena P."/>
            <person name="Barnard D.L."/>
            <person name="Thorn K.S."/>
            <person name="Mangel W.F."/>
        </authorList>
    </citation>
    <scope>INTERACTION WITH VIRAL PROTEASE (PROTEASE COFACTOR)</scope>
</reference>
<reference key="7">
    <citation type="journal article" date="2002" name="Virology">
        <title>In the virion, the 11-amino-acid peptide cofactor pVIc is covalently linked to the adenovirus proteinase.</title>
        <authorList>
            <person name="McGrath W.J."/>
            <person name="Aherne K.S."/>
            <person name="Mangel W.F."/>
        </authorList>
    </citation>
    <scope>INTERCHAIN DISULFIDE BOND WITH VIRAL PROTEASE (PROTEASE COFACTOR)</scope>
</reference>
<reference key="8">
    <citation type="journal article" date="2011" name="Cell Host Microbe">
        <title>Drifting motions of the adenovirus receptor CAR and immobile integrins initiate virus uncoating and membrane lytic protein exposure.</title>
        <authorList>
            <person name="Burckhardt C.J."/>
            <person name="Suomalainen M."/>
            <person name="Schoenenberger P."/>
            <person name="Boucke K."/>
            <person name="Hemmi S."/>
            <person name="Greber U.F."/>
        </authorList>
    </citation>
    <scope>FUNCTION (ENDOSOME LYSIS PROTEIN)</scope>
</reference>
<reference key="9">
    <citation type="journal article" date="2012" name="Viruses">
        <title>Latest insights on adenovirus structure and assembly.</title>
        <authorList>
            <person name="San Martin C."/>
        </authorList>
    </citation>
    <scope>REVIEW</scope>
</reference>
<reference key="10">
    <citation type="journal article" date="1996" name="EMBO J.">
        <title>Crystal structure of the human adenovirus proteinase with its 11 amino acid cofactor.</title>
        <authorList>
            <person name="Ding J."/>
            <person name="McGrath W.J."/>
            <person name="Sweet R.M."/>
            <person name="Mangel W.F."/>
        </authorList>
    </citation>
    <scope>X-RAY CRYSTALLOGRAPHY (2.6 ANGSTROMS) OF 240-250 IN COMPLEX WITH VIRAL PROTEASE</scope>
</reference>
<gene>
    <name evidence="1" type="primary">L3</name>
</gene>
<feature type="chain" id="PRO_0000421078" description="Pre-protein VI" evidence="1">
    <location>
        <begin position="1"/>
        <end position="250"/>
    </location>
</feature>
<feature type="propeptide" id="PRO_0000036543" evidence="1">
    <location>
        <begin position="1"/>
        <end position="33"/>
    </location>
</feature>
<feature type="chain" id="PRO_0000036544" description="Endosome lysis protein" evidence="1">
    <location>
        <begin position="34"/>
        <end position="239"/>
    </location>
</feature>
<feature type="peptide" id="PRO_0000036545" description="Protease cofactor">
    <location>
        <begin position="240"/>
        <end position="250"/>
    </location>
</feature>
<feature type="chain" id="PRO_0000439552" description="Protease cofactor" evidence="1">
    <location>
        <begin position="240"/>
        <end position="250"/>
    </location>
</feature>
<feature type="region of interest" description="Amphipathic alpha-helix essential for membrane lytic activity" evidence="1">
    <location>
        <begin position="34"/>
        <end position="54"/>
    </location>
</feature>
<feature type="region of interest" description="Involved in endosomal membrane lysis" evidence="1">
    <location>
        <begin position="36"/>
        <end position="53"/>
    </location>
</feature>
<feature type="region of interest" description="Interaction with hexon protein" evidence="1">
    <location>
        <begin position="48"/>
        <end position="74"/>
    </location>
</feature>
<feature type="region of interest" description="Disordered" evidence="2">
    <location>
        <begin position="103"/>
        <end position="147"/>
    </location>
</feature>
<feature type="region of interest" description="Disordered" evidence="2">
    <location>
        <begin position="206"/>
        <end position="226"/>
    </location>
</feature>
<feature type="region of interest" description="Interaction with hexon protein" evidence="1">
    <location>
        <begin position="233"/>
        <end position="239"/>
    </location>
</feature>
<feature type="region of interest" description="Binds to importin alpha/beta, involved in hexon nuclear import" evidence="1">
    <location>
        <begin position="240"/>
        <end position="250"/>
    </location>
</feature>
<feature type="short sequence motif" description="Nuclear export signal" evidence="1">
    <location>
        <begin position="67"/>
        <end position="76"/>
    </location>
</feature>
<feature type="short sequence motif" description="Nuclear localization signal" evidence="1">
    <location>
        <begin position="131"/>
        <end position="135"/>
    </location>
</feature>
<feature type="short sequence motif" description="PPXY motif" evidence="1">
    <location>
        <begin position="148"/>
        <end position="151"/>
    </location>
</feature>
<feature type="short sequence motif" description="Nuclear export signal" evidence="1">
    <location>
        <begin position="231"/>
        <end position="242"/>
    </location>
</feature>
<feature type="short sequence motif" description="Nuclear localization signal" evidence="1">
    <location>
        <begin position="245"/>
        <end position="248"/>
    </location>
</feature>
<feature type="compositionally biased region" description="Basic and acidic residues" evidence="2">
    <location>
        <begin position="127"/>
        <end position="140"/>
    </location>
</feature>
<feature type="compositionally biased region" description="Low complexity" evidence="2">
    <location>
        <begin position="206"/>
        <end position="220"/>
    </location>
</feature>
<feature type="site" description="Cleavage; by viral protease" evidence="1">
    <location>
        <begin position="33"/>
        <end position="34"/>
    </location>
</feature>
<feature type="site" description="Cleavage; by viral protease" evidence="1">
    <location>
        <begin position="239"/>
        <end position="240"/>
    </location>
</feature>
<feature type="modified residue" description="Phosphoserine; by host" evidence="1 5">
    <location>
        <position position="124"/>
    </location>
</feature>
<feature type="modified residue" description="Phosphothreonine; by host" evidence="1 5">
    <location>
        <position position="143"/>
    </location>
</feature>
<feature type="disulfide bond" description="Interchain (with Adenovirus protease)" evidence="1">
    <location>
        <position position="249"/>
    </location>
</feature>
<feature type="strand" evidence="9">
    <location>
        <begin position="243"/>
        <end position="249"/>
    </location>
</feature>
<organismHost>
    <name type="scientific">Homo sapiens</name>
    <name type="common">Human</name>
    <dbReference type="NCBI Taxonomy" id="9606"/>
</organismHost>
<comment type="function">
    <molecule>Pre-protein VI</molecule>
    <text evidence="1">During virus assembly, promotes hexon trimers nuclear import through nuclear pore complexes via an importin alpha/beta-dependent mechanism. By analogy to herpesviruses capsid assembly, might act as a chaperone to promote the formation of the icosahedral capsid.</text>
</comment>
<comment type="function">
    <molecule>Endosome lysis protein</molecule>
    <text evidence="1 4">Structural component of the virion that provides increased stability to the particle shell through its interaction with the core-capsid bridging protein and the hexon-linking protein VIII. Fibers shedding during virus entry into host cell allows the endosome lysis protein to be exposed as a membrane-lytic peptide. Exhibits pH-independent membrane fragmentation activity and probably mediates viral rapid escape from host endosome via organellar membrane lysis. It is not clear if it then remains partially associated with the capsid and involved in the intracellular microtubule-dependent transport of capsid to the nucleus, or if it is lost during endosomal penetration.</text>
</comment>
<comment type="function">
    <molecule>Protease cofactor</molecule>
    <text evidence="1">Cofactor that activates the viral protease. Binds to viral protease in a 1:1 ratio.</text>
</comment>
<comment type="subunit">
    <molecule>Pre-protein VI</molecule>
    <text evidence="1 6">Interacts with hexon protein; this interaction allows nuclear import of hexon trimers and possibly pre-capsid assembly (PubMed:7636476). Interacts (via C-terminal NLS) with importin alpha/beta.</text>
</comment>
<comment type="subunit">
    <molecule>Endosome lysis protein</molecule>
    <text evidence="1">Interacts (via PPxY motif) with host NEDD4 ubiquitine ligase; this interaction might play a role in virus intracellular transport during entry. Part of a complex composed of the core-capsid bridging protein, the endosome lysis protein VI and the hexon-linking protein VIII; these interactions bridge the virus core to the capsid. Interacts with peripentonal hexons; this interaction stabilizes the capsid by gluing two peripentonal hexons together and joining them with an adjacent group-of-nine hexon.</text>
</comment>
<comment type="subunit">
    <molecule>Protease cofactor</molecule>
    <text evidence="1 3 7 8">Heterodimer with the viral protease; disulfide-linked (PubMed:12069522, PubMed:8422686). Interacts with the viral protease (PubMed:11591154, PubMed:8617222).</text>
</comment>
<comment type="subcellular location">
    <molecule>Pre-protein VI</molecule>
    <subcellularLocation>
        <location evidence="1">Host nucleus</location>
    </subcellularLocation>
    <subcellularLocation>
        <location evidence="1">Host cytoplasm</location>
    </subcellularLocation>
    <text evidence="1">Shuttles between host cytoplasm and nucleus.</text>
</comment>
<comment type="subcellular location">
    <molecule>Endosome lysis protein</molecule>
    <subcellularLocation>
        <location evidence="1">Virion</location>
    </subcellularLocation>
    <text evidence="1">Associates with the base of each peripentonal hexon on the capsid interior. Present in around 360 copies per virion.</text>
</comment>
<comment type="induction">
    <text evidence="1">Expressed in the late phase of the viral replicative cycle.</text>
</comment>
<comment type="domain">
    <text evidence="1">N-terminal amphipathic alpha-helix domain is essential for the membrane lytic activity.</text>
</comment>
<comment type="domain">
    <text evidence="1">Late-budding domains (L domains) are short sequence motifs essential for viral particle release. They can occur individually or in close proximity within structural proteins. They interacts with sorting cellular proteins of the multivesicular body (MVB) pathway. Most of these proteins are class E vacuolar protein sorting factors belonging to ESCRT-I, ESCRT-II or ESCRT-III complexes. Minor capsid protein 6 contains one L domain: a PPXY motif which binds to the WW domains of HECT (homologous to E6-AP C-terminus) E3 ubiquitin ligases, like NEDD4. In adenoviruses, this motif seems to play a role in microtubule-dependent intracellular trafficking toward the nucleus during virus entry into host cell and in suppression of DAXX-mediated repression of the immediate early E1A promoter.</text>
</comment>
<comment type="PTM">
    <text evidence="1">Ubiquitinated by Nedd4 following partial capsid disassembly; which might play a role in intracellular virus movement during entry.</text>
</comment>
<comment type="PTM">
    <molecule>Protease cofactor</molecule>
    <text evidence="1">Contains the major nuclear import and export signals. Proteolytically removed during virion maturation. The processing of the C-terminus turns the precursor into a mature viral structural protein and abrogates its ability to promote hexon import and act as a potential chaperone protein.</text>
</comment>
<comment type="miscellaneous">
    <text evidence="1">All late proteins expressed from the major late promoter are produced by alternative splicing and alternative polyadenylation of the same gene giving rise to non-overlapping ORFs. A leader sequence is present in the N-terminus of all these mRNAs and is recognized by the viral shutoff protein to provide expression although conventional translation via ribosome scanning from the cap has been shut off in the host cell.</text>
</comment>
<comment type="similarity">
    <text evidence="1">Belongs to the adenoviridae protein VI family.</text>
</comment>
<accession>P03274</accession>